<protein>
    <recommendedName>
        <fullName evidence="1">Ribosomal protein uS12 methylthiotransferase RimO</fullName>
        <shortName evidence="1">uS12 MTTase</shortName>
        <shortName evidence="1">uS12 methylthiotransferase</shortName>
        <ecNumber evidence="1">2.8.4.4</ecNumber>
    </recommendedName>
    <alternativeName>
        <fullName evidence="1">Ribosomal protein uS12 (aspartate-C(3))-methylthiotransferase</fullName>
    </alternativeName>
    <alternativeName>
        <fullName evidence="1">Ribosome maturation factor RimO</fullName>
    </alternativeName>
</protein>
<organism>
    <name type="scientific">Ralstonia nicotianae (strain ATCC BAA-1114 / GMI1000)</name>
    <name type="common">Ralstonia solanacearum</name>
    <dbReference type="NCBI Taxonomy" id="267608"/>
    <lineage>
        <taxon>Bacteria</taxon>
        <taxon>Pseudomonadati</taxon>
        <taxon>Pseudomonadota</taxon>
        <taxon>Betaproteobacteria</taxon>
        <taxon>Burkholderiales</taxon>
        <taxon>Burkholderiaceae</taxon>
        <taxon>Ralstonia</taxon>
        <taxon>Ralstonia solanacearum species complex</taxon>
    </lineage>
</organism>
<reference key="1">
    <citation type="journal article" date="2002" name="Nature">
        <title>Genome sequence of the plant pathogen Ralstonia solanacearum.</title>
        <authorList>
            <person name="Salanoubat M."/>
            <person name="Genin S."/>
            <person name="Artiguenave F."/>
            <person name="Gouzy J."/>
            <person name="Mangenot S."/>
            <person name="Arlat M."/>
            <person name="Billault A."/>
            <person name="Brottier P."/>
            <person name="Camus J.-C."/>
            <person name="Cattolico L."/>
            <person name="Chandler M."/>
            <person name="Choisne N."/>
            <person name="Claudel-Renard C."/>
            <person name="Cunnac S."/>
            <person name="Demange N."/>
            <person name="Gaspin C."/>
            <person name="Lavie M."/>
            <person name="Moisan A."/>
            <person name="Robert C."/>
            <person name="Saurin W."/>
            <person name="Schiex T."/>
            <person name="Siguier P."/>
            <person name="Thebault P."/>
            <person name="Whalen M."/>
            <person name="Wincker P."/>
            <person name="Levy M."/>
            <person name="Weissenbach J."/>
            <person name="Boucher C.A."/>
        </authorList>
    </citation>
    <scope>NUCLEOTIDE SEQUENCE [LARGE SCALE GENOMIC DNA]</scope>
    <source>
        <strain>ATCC BAA-1114 / GMI1000</strain>
    </source>
</reference>
<gene>
    <name evidence="1" type="primary">rimO</name>
    <name type="ordered locus">RSc1636</name>
</gene>
<feature type="chain" id="PRO_0000374963" description="Ribosomal protein uS12 methylthiotransferase RimO">
    <location>
        <begin position="1"/>
        <end position="453"/>
    </location>
</feature>
<feature type="domain" description="MTTase N-terminal" evidence="1">
    <location>
        <begin position="9"/>
        <end position="124"/>
    </location>
</feature>
<feature type="domain" description="Radical SAM core" evidence="2">
    <location>
        <begin position="141"/>
        <end position="382"/>
    </location>
</feature>
<feature type="domain" description="TRAM" evidence="1">
    <location>
        <begin position="385"/>
        <end position="453"/>
    </location>
</feature>
<feature type="binding site" evidence="1">
    <location>
        <position position="18"/>
    </location>
    <ligand>
        <name>[4Fe-4S] cluster</name>
        <dbReference type="ChEBI" id="CHEBI:49883"/>
        <label>1</label>
    </ligand>
</feature>
<feature type="binding site" evidence="1">
    <location>
        <position position="54"/>
    </location>
    <ligand>
        <name>[4Fe-4S] cluster</name>
        <dbReference type="ChEBI" id="CHEBI:49883"/>
        <label>1</label>
    </ligand>
</feature>
<feature type="binding site" evidence="1">
    <location>
        <position position="83"/>
    </location>
    <ligand>
        <name>[4Fe-4S] cluster</name>
        <dbReference type="ChEBI" id="CHEBI:49883"/>
        <label>1</label>
    </ligand>
</feature>
<feature type="binding site" evidence="1">
    <location>
        <position position="155"/>
    </location>
    <ligand>
        <name>[4Fe-4S] cluster</name>
        <dbReference type="ChEBI" id="CHEBI:49883"/>
        <label>2</label>
        <note>4Fe-4S-S-AdoMet</note>
    </ligand>
</feature>
<feature type="binding site" evidence="1">
    <location>
        <position position="159"/>
    </location>
    <ligand>
        <name>[4Fe-4S] cluster</name>
        <dbReference type="ChEBI" id="CHEBI:49883"/>
        <label>2</label>
        <note>4Fe-4S-S-AdoMet</note>
    </ligand>
</feature>
<feature type="binding site" evidence="1">
    <location>
        <position position="162"/>
    </location>
    <ligand>
        <name>[4Fe-4S] cluster</name>
        <dbReference type="ChEBI" id="CHEBI:49883"/>
        <label>2</label>
        <note>4Fe-4S-S-AdoMet</note>
    </ligand>
</feature>
<comment type="function">
    <text evidence="1">Catalyzes the methylthiolation of an aspartic acid residue of ribosomal protein uS12.</text>
</comment>
<comment type="catalytic activity">
    <reaction evidence="1">
        <text>L-aspartate(89)-[ribosomal protein uS12]-hydrogen + (sulfur carrier)-SH + AH2 + 2 S-adenosyl-L-methionine = 3-methylsulfanyl-L-aspartate(89)-[ribosomal protein uS12]-hydrogen + (sulfur carrier)-H + 5'-deoxyadenosine + L-methionine + A + S-adenosyl-L-homocysteine + 2 H(+)</text>
        <dbReference type="Rhea" id="RHEA:37087"/>
        <dbReference type="Rhea" id="RHEA-COMP:10460"/>
        <dbReference type="Rhea" id="RHEA-COMP:10461"/>
        <dbReference type="Rhea" id="RHEA-COMP:14737"/>
        <dbReference type="Rhea" id="RHEA-COMP:14739"/>
        <dbReference type="ChEBI" id="CHEBI:13193"/>
        <dbReference type="ChEBI" id="CHEBI:15378"/>
        <dbReference type="ChEBI" id="CHEBI:17319"/>
        <dbReference type="ChEBI" id="CHEBI:17499"/>
        <dbReference type="ChEBI" id="CHEBI:29917"/>
        <dbReference type="ChEBI" id="CHEBI:29961"/>
        <dbReference type="ChEBI" id="CHEBI:57844"/>
        <dbReference type="ChEBI" id="CHEBI:57856"/>
        <dbReference type="ChEBI" id="CHEBI:59789"/>
        <dbReference type="ChEBI" id="CHEBI:64428"/>
        <dbReference type="ChEBI" id="CHEBI:73599"/>
        <dbReference type="EC" id="2.8.4.4"/>
    </reaction>
</comment>
<comment type="cofactor">
    <cofactor evidence="1">
        <name>[4Fe-4S] cluster</name>
        <dbReference type="ChEBI" id="CHEBI:49883"/>
    </cofactor>
    <text evidence="1">Binds 2 [4Fe-4S] clusters. One cluster is coordinated with 3 cysteines and an exchangeable S-adenosyl-L-methionine.</text>
</comment>
<comment type="subcellular location">
    <subcellularLocation>
        <location evidence="1">Cytoplasm</location>
    </subcellularLocation>
</comment>
<comment type="similarity">
    <text evidence="1">Belongs to the methylthiotransferase family. RimO subfamily.</text>
</comment>
<proteinExistence type="inferred from homology"/>
<accession>Q8XYX0</accession>
<sequence length="453" mass="49488">MSDVSTQSPKVGFVSLGCPKALVDSEQIITQLRAEGYEISGTYGGADLVVVNTCGFIDEAVQESLDAIGEALAENGKVIVTGCLGAKKDAAGQDIITSVHPKVLAVTGPHALGEVMEAVHTHLPKPHDPFIDLVPPQGIKLTPKHYAYLKISEGCNHRCSFCIIPSMRGDLVSRPVAEVMLEAENLLKAGVKELLVISQDTSAYGVDVKFRTGFWNGRPLKTRMTELVGALGELAAQYGAWVRLHYVYPYPSVDEVMPLMAEGKVLPYLDVPLQHAHPEVLKRMKRPANAEKTLDRIRAWREVCPELTIRSTFIAGFPGETEEEFQTLLDFIAEAELDRVGCFAYSPVEGATANDLPGALPDEVREERRARFMEVAERVSARRLQRKVGKTLRVLVDEVNQDGGIGRSSADAPEIDGLVYIAPPSKPYKRYKAGDFVSVKITGADGHDLWGEV</sequence>
<dbReference type="EC" id="2.8.4.4" evidence="1"/>
<dbReference type="EMBL" id="AL646052">
    <property type="protein sequence ID" value="CAD15338.1"/>
    <property type="molecule type" value="Genomic_DNA"/>
</dbReference>
<dbReference type="RefSeq" id="WP_011001578.1">
    <property type="nucleotide sequence ID" value="NC_003295.1"/>
</dbReference>
<dbReference type="SMR" id="Q8XYX0"/>
<dbReference type="STRING" id="267608.RSc1636"/>
<dbReference type="EnsemblBacteria" id="CAD15338">
    <property type="protein sequence ID" value="CAD15338"/>
    <property type="gene ID" value="RSc1636"/>
</dbReference>
<dbReference type="KEGG" id="rso:RSc1636"/>
<dbReference type="eggNOG" id="COG0621">
    <property type="taxonomic scope" value="Bacteria"/>
</dbReference>
<dbReference type="HOGENOM" id="CLU_018697_0_0_4"/>
<dbReference type="Proteomes" id="UP000001436">
    <property type="component" value="Chromosome"/>
</dbReference>
<dbReference type="GO" id="GO:0005829">
    <property type="term" value="C:cytosol"/>
    <property type="evidence" value="ECO:0007669"/>
    <property type="project" value="TreeGrafter"/>
</dbReference>
<dbReference type="GO" id="GO:0051539">
    <property type="term" value="F:4 iron, 4 sulfur cluster binding"/>
    <property type="evidence" value="ECO:0007669"/>
    <property type="project" value="UniProtKB-UniRule"/>
</dbReference>
<dbReference type="GO" id="GO:0035599">
    <property type="term" value="F:aspartic acid methylthiotransferase activity"/>
    <property type="evidence" value="ECO:0007669"/>
    <property type="project" value="TreeGrafter"/>
</dbReference>
<dbReference type="GO" id="GO:0046872">
    <property type="term" value="F:metal ion binding"/>
    <property type="evidence" value="ECO:0007669"/>
    <property type="project" value="UniProtKB-KW"/>
</dbReference>
<dbReference type="GO" id="GO:0103039">
    <property type="term" value="F:protein methylthiotransferase activity"/>
    <property type="evidence" value="ECO:0007669"/>
    <property type="project" value="UniProtKB-EC"/>
</dbReference>
<dbReference type="GO" id="GO:0006400">
    <property type="term" value="P:tRNA modification"/>
    <property type="evidence" value="ECO:0007669"/>
    <property type="project" value="InterPro"/>
</dbReference>
<dbReference type="CDD" id="cd01335">
    <property type="entry name" value="Radical_SAM"/>
    <property type="match status" value="1"/>
</dbReference>
<dbReference type="FunFam" id="3.40.50.12160:FF:000002">
    <property type="entry name" value="Ribosomal protein S12 methylthiotransferase RimO"/>
    <property type="match status" value="1"/>
</dbReference>
<dbReference type="FunFam" id="3.80.30.20:FF:000001">
    <property type="entry name" value="tRNA-2-methylthio-N(6)-dimethylallyladenosine synthase 2"/>
    <property type="match status" value="1"/>
</dbReference>
<dbReference type="Gene3D" id="3.40.50.12160">
    <property type="entry name" value="Methylthiotransferase, N-terminal domain"/>
    <property type="match status" value="1"/>
</dbReference>
<dbReference type="Gene3D" id="2.40.50.140">
    <property type="entry name" value="Nucleic acid-binding proteins"/>
    <property type="match status" value="1"/>
</dbReference>
<dbReference type="Gene3D" id="3.80.30.20">
    <property type="entry name" value="tm_1862 like domain"/>
    <property type="match status" value="1"/>
</dbReference>
<dbReference type="HAMAP" id="MF_01865">
    <property type="entry name" value="MTTase_RimO"/>
    <property type="match status" value="1"/>
</dbReference>
<dbReference type="InterPro" id="IPR006638">
    <property type="entry name" value="Elp3/MiaA/NifB-like_rSAM"/>
</dbReference>
<dbReference type="InterPro" id="IPR005839">
    <property type="entry name" value="Methylthiotransferase"/>
</dbReference>
<dbReference type="InterPro" id="IPR020612">
    <property type="entry name" value="Methylthiotransferase_CS"/>
</dbReference>
<dbReference type="InterPro" id="IPR013848">
    <property type="entry name" value="Methylthiotransferase_N"/>
</dbReference>
<dbReference type="InterPro" id="IPR038135">
    <property type="entry name" value="Methylthiotransferase_N_sf"/>
</dbReference>
<dbReference type="InterPro" id="IPR012340">
    <property type="entry name" value="NA-bd_OB-fold"/>
</dbReference>
<dbReference type="InterPro" id="IPR005840">
    <property type="entry name" value="Ribosomal_uS12_MeSTrfase_RimO"/>
</dbReference>
<dbReference type="InterPro" id="IPR007197">
    <property type="entry name" value="rSAM"/>
</dbReference>
<dbReference type="InterPro" id="IPR023404">
    <property type="entry name" value="rSAM_horseshoe"/>
</dbReference>
<dbReference type="InterPro" id="IPR002792">
    <property type="entry name" value="TRAM_dom"/>
</dbReference>
<dbReference type="NCBIfam" id="TIGR01125">
    <property type="entry name" value="30S ribosomal protein S12 methylthiotransferase RimO"/>
    <property type="match status" value="1"/>
</dbReference>
<dbReference type="NCBIfam" id="TIGR00089">
    <property type="entry name" value="MiaB/RimO family radical SAM methylthiotransferase"/>
    <property type="match status" value="1"/>
</dbReference>
<dbReference type="PANTHER" id="PTHR43837">
    <property type="entry name" value="RIBOSOMAL PROTEIN S12 METHYLTHIOTRANSFERASE RIMO"/>
    <property type="match status" value="1"/>
</dbReference>
<dbReference type="PANTHER" id="PTHR43837:SF1">
    <property type="entry name" value="RIBOSOMAL PROTEIN US12 METHYLTHIOTRANSFERASE RIMO"/>
    <property type="match status" value="1"/>
</dbReference>
<dbReference type="Pfam" id="PF04055">
    <property type="entry name" value="Radical_SAM"/>
    <property type="match status" value="1"/>
</dbReference>
<dbReference type="Pfam" id="PF18693">
    <property type="entry name" value="TRAM_2"/>
    <property type="match status" value="1"/>
</dbReference>
<dbReference type="Pfam" id="PF00919">
    <property type="entry name" value="UPF0004"/>
    <property type="match status" value="1"/>
</dbReference>
<dbReference type="SFLD" id="SFLDG01082">
    <property type="entry name" value="B12-binding_domain_containing"/>
    <property type="match status" value="1"/>
</dbReference>
<dbReference type="SFLD" id="SFLDS00029">
    <property type="entry name" value="Radical_SAM"/>
    <property type="match status" value="1"/>
</dbReference>
<dbReference type="SFLD" id="SFLDF00274">
    <property type="entry name" value="ribosomal_protein_S12_methylth"/>
    <property type="match status" value="1"/>
</dbReference>
<dbReference type="SMART" id="SM00729">
    <property type="entry name" value="Elp3"/>
    <property type="match status" value="1"/>
</dbReference>
<dbReference type="SUPFAM" id="SSF102114">
    <property type="entry name" value="Radical SAM enzymes"/>
    <property type="match status" value="1"/>
</dbReference>
<dbReference type="PROSITE" id="PS51449">
    <property type="entry name" value="MTTASE_N"/>
    <property type="match status" value="1"/>
</dbReference>
<dbReference type="PROSITE" id="PS01278">
    <property type="entry name" value="MTTASE_RADICAL"/>
    <property type="match status" value="1"/>
</dbReference>
<dbReference type="PROSITE" id="PS51918">
    <property type="entry name" value="RADICAL_SAM"/>
    <property type="match status" value="1"/>
</dbReference>
<dbReference type="PROSITE" id="PS50926">
    <property type="entry name" value="TRAM"/>
    <property type="match status" value="1"/>
</dbReference>
<evidence type="ECO:0000255" key="1">
    <source>
        <dbReference type="HAMAP-Rule" id="MF_01865"/>
    </source>
</evidence>
<evidence type="ECO:0000255" key="2">
    <source>
        <dbReference type="PROSITE-ProRule" id="PRU01266"/>
    </source>
</evidence>
<keyword id="KW-0004">4Fe-4S</keyword>
<keyword id="KW-0963">Cytoplasm</keyword>
<keyword id="KW-0408">Iron</keyword>
<keyword id="KW-0411">Iron-sulfur</keyword>
<keyword id="KW-0479">Metal-binding</keyword>
<keyword id="KW-1185">Reference proteome</keyword>
<keyword id="KW-0949">S-adenosyl-L-methionine</keyword>
<keyword id="KW-0808">Transferase</keyword>
<name>RIMO_RALN1</name>